<comment type="function">
    <text evidence="3">Component of the cell division machinery, which is probably involved in the stabilization of the divisome under certain stress conditions.</text>
</comment>
<comment type="subunit">
    <text evidence="3">Interacts with FtsL and several other divisomal proteins, including FtsI, FtsK, FtsN, FtsQ, FtsW and YmgF.</text>
</comment>
<comment type="interaction">
    <interactant intactId="EBI-6419495">
        <id>P56976</id>
    </interactant>
    <interactant intactId="EBI-1119082">
        <id>P0AEN4</id>
        <label>ftsL</label>
    </interactant>
    <organismsDiffer>false</organismsDiffer>
    <experiments>3</experiments>
</comment>
<comment type="interaction">
    <interactant intactId="EBI-6419495">
        <id>P56976</id>
    </interactant>
    <interactant intactId="EBI-1134233">
        <id>P29131</id>
        <label>ftsN</label>
    </interactant>
    <organismsDiffer>false</organismsDiffer>
    <experiments>3</experiments>
</comment>
<comment type="subcellular location">
    <subcellularLocation>
        <location evidence="2 3">Cell inner membrane</location>
        <topology evidence="2 3">Single-pass membrane protein</topology>
    </subcellularLocation>
    <text>Localizes to the division septum. Localization requires FtsQ and FtsN.</text>
</comment>
<comment type="PTM">
    <text>The N-terminus is blocked.</text>
</comment>
<comment type="disruption phenotype">
    <text evidence="2">Inactivation increases the susceptibility of bacteria to a number of antibiotics that inhibit peptidoglycan biosynthesis. Increases the susceptibility to cycloserine, bacitracin, and a wide spectrum of beta-lactam antibiotics. Does not affect susceptibility to fosfomycin, valinomycin, tetracycline, chloramphenicol, gentamicin or quinolones.</text>
</comment>
<name>BLR_ECOLI</name>
<feature type="chain" id="PRO_0000064943" description="Divisome-associated membrane protein Blr">
    <location>
        <begin position="1"/>
        <end position="41"/>
    </location>
</feature>
<feature type="topological domain" description="Cytoplasmic" evidence="1">
    <location>
        <begin position="1"/>
        <end position="3"/>
    </location>
</feature>
<feature type="transmembrane region" description="Helical" evidence="1">
    <location>
        <begin position="4"/>
        <end position="24"/>
    </location>
</feature>
<feature type="topological domain" description="Periplasmic" evidence="1">
    <location>
        <begin position="25"/>
        <end position="41"/>
    </location>
</feature>
<proteinExistence type="evidence at protein level"/>
<protein>
    <recommendedName>
        <fullName>Divisome-associated membrane protein Blr</fullName>
    </recommendedName>
    <alternativeName>
        <fullName>Beta-lactam resistance protein</fullName>
    </alternativeName>
</protein>
<keyword id="KW-0046">Antibiotic resistance</keyword>
<keyword id="KW-0131">Cell cycle</keyword>
<keyword id="KW-0132">Cell division</keyword>
<keyword id="KW-0997">Cell inner membrane</keyword>
<keyword id="KW-1003">Cell membrane</keyword>
<keyword id="KW-0472">Membrane</keyword>
<keyword id="KW-1185">Reference proteome</keyword>
<keyword id="KW-0346">Stress response</keyword>
<keyword id="KW-0812">Transmembrane</keyword>
<keyword id="KW-1133">Transmembrane helix</keyword>
<evidence type="ECO:0000255" key="1"/>
<evidence type="ECO:0000269" key="2">
    <source>
    </source>
</evidence>
<evidence type="ECO:0000269" key="3">
    <source>
    </source>
</evidence>
<gene>
    <name type="primary">blr</name>
    <name type="ordered locus">b4409</name>
    <name type="ordered locus">JW5963</name>
</gene>
<dbReference type="EMBL" id="AF219227">
    <property type="protein sequence ID" value="AAF82191.1"/>
    <property type="molecule type" value="Genomic_DNA"/>
</dbReference>
<dbReference type="EMBL" id="U00096">
    <property type="protein sequence ID" value="AAT48132.1"/>
    <property type="molecule type" value="Genomic_DNA"/>
</dbReference>
<dbReference type="EMBL" id="AP009048">
    <property type="protein sequence ID" value="BAE76483.1"/>
    <property type="molecule type" value="Genomic_DNA"/>
</dbReference>
<dbReference type="RefSeq" id="WP_001300888.1">
    <property type="nucleotide sequence ID" value="NZ_STEB01000003.1"/>
</dbReference>
<dbReference type="RefSeq" id="YP_025303.1">
    <property type="nucleotide sequence ID" value="NC_000913.3"/>
</dbReference>
<dbReference type="SMR" id="P56976"/>
<dbReference type="BioGRID" id="4259631">
    <property type="interactions" value="432"/>
</dbReference>
<dbReference type="BioGRID" id="853435">
    <property type="interactions" value="1"/>
</dbReference>
<dbReference type="FunCoup" id="P56976">
    <property type="interactions" value="7"/>
</dbReference>
<dbReference type="IntAct" id="P56976">
    <property type="interactions" value="8"/>
</dbReference>
<dbReference type="STRING" id="511145.b4409"/>
<dbReference type="PaxDb" id="511145-b4409"/>
<dbReference type="EnsemblBacteria" id="AAT48132">
    <property type="protein sequence ID" value="AAT48132"/>
    <property type="gene ID" value="b4409"/>
</dbReference>
<dbReference type="GeneID" id="2847682"/>
<dbReference type="GeneID" id="93775776"/>
<dbReference type="KEGG" id="ecj:JW5963"/>
<dbReference type="KEGG" id="eco:b4409"/>
<dbReference type="PATRIC" id="fig|83333.103.peg.2464"/>
<dbReference type="HOGENOM" id="CLU_185071_0_0_6"/>
<dbReference type="InParanoid" id="P56976"/>
<dbReference type="BioCyc" id="EcoCyc:MONOMER0-1561"/>
<dbReference type="PRO" id="PR:P56976"/>
<dbReference type="Proteomes" id="UP000000625">
    <property type="component" value="Chromosome"/>
</dbReference>
<dbReference type="GO" id="GO:0000935">
    <property type="term" value="C:division septum"/>
    <property type="evidence" value="ECO:0000314"/>
    <property type="project" value="EcoCyc"/>
</dbReference>
<dbReference type="GO" id="GO:0016020">
    <property type="term" value="C:membrane"/>
    <property type="evidence" value="ECO:0000314"/>
    <property type="project" value="EcoCyc"/>
</dbReference>
<dbReference type="GO" id="GO:0005886">
    <property type="term" value="C:plasma membrane"/>
    <property type="evidence" value="ECO:0007669"/>
    <property type="project" value="UniProtKB-SubCell"/>
</dbReference>
<dbReference type="GO" id="GO:0051301">
    <property type="term" value="P:cell division"/>
    <property type="evidence" value="ECO:0007669"/>
    <property type="project" value="UniProtKB-KW"/>
</dbReference>
<dbReference type="GO" id="GO:0036460">
    <property type="term" value="P:cellular response to cell envelope stress"/>
    <property type="evidence" value="ECO:0000315"/>
    <property type="project" value="EcoCyc"/>
</dbReference>
<dbReference type="GO" id="GO:0033554">
    <property type="term" value="P:cellular response to stress"/>
    <property type="evidence" value="ECO:0000315"/>
    <property type="project" value="EcoCyc"/>
</dbReference>
<dbReference type="GO" id="GO:0046677">
    <property type="term" value="P:response to antibiotic"/>
    <property type="evidence" value="ECO:0000315"/>
    <property type="project" value="EcoCyc"/>
</dbReference>
<dbReference type="InterPro" id="IPR049597">
    <property type="entry name" value="Blr-like"/>
</dbReference>
<dbReference type="NCBIfam" id="NF033231">
    <property type="entry name" value="small_Blr"/>
    <property type="match status" value="1"/>
</dbReference>
<dbReference type="Pfam" id="PF24673">
    <property type="entry name" value="Blr_divisome"/>
    <property type="match status" value="1"/>
</dbReference>
<accession>P56976</accession>
<accession>Q2MB73</accession>
<reference key="1">
    <citation type="journal article" date="2000" name="Mol. Microbiol.">
        <title>'Intergenic' blr gene in Escherichia coli encodes a 41-residue membrane protein affecting intrinsic susceptibility to certain inhibitors of peptidoglycan synthesis.</title>
        <authorList>
            <person name="Wong R.S.Y."/>
            <person name="McMurry L.M."/>
            <person name="Levy S.B."/>
        </authorList>
    </citation>
    <scope>NUCLEOTIDE SEQUENCE [GENOMIC DNA]</scope>
    <scope>IDENTIFICATION</scope>
    <scope>SUBCELLULAR LOCATION</scope>
    <scope>TOPOLOGY</scope>
    <scope>DISRUPTION PHENOTYPE</scope>
    <scope>BLOCKAGE OF N-TERMINUS</scope>
    <source>
        <strain>K12</strain>
    </source>
</reference>
<reference key="2">
    <citation type="journal article" date="1997" name="Science">
        <title>The complete genome sequence of Escherichia coli K-12.</title>
        <authorList>
            <person name="Blattner F.R."/>
            <person name="Plunkett G. III"/>
            <person name="Bloch C.A."/>
            <person name="Perna N.T."/>
            <person name="Burland V."/>
            <person name="Riley M."/>
            <person name="Collado-Vides J."/>
            <person name="Glasner J.D."/>
            <person name="Rode C.K."/>
            <person name="Mayhew G.F."/>
            <person name="Gregor J."/>
            <person name="Davis N.W."/>
            <person name="Kirkpatrick H.A."/>
            <person name="Goeden M.A."/>
            <person name="Rose D.J."/>
            <person name="Mau B."/>
            <person name="Shao Y."/>
        </authorList>
    </citation>
    <scope>NUCLEOTIDE SEQUENCE [LARGE SCALE GENOMIC DNA]</scope>
    <source>
        <strain>K12 / MG1655 / ATCC 47076</strain>
    </source>
</reference>
<reference key="3">
    <citation type="journal article" date="2006" name="Mol. Syst. Biol.">
        <title>Highly accurate genome sequences of Escherichia coli K-12 strains MG1655 and W3110.</title>
        <authorList>
            <person name="Hayashi K."/>
            <person name="Morooka N."/>
            <person name="Yamamoto Y."/>
            <person name="Fujita K."/>
            <person name="Isono K."/>
            <person name="Choi S."/>
            <person name="Ohtsubo E."/>
            <person name="Baba T."/>
            <person name="Wanner B.L."/>
            <person name="Mori H."/>
            <person name="Horiuchi T."/>
        </authorList>
    </citation>
    <scope>NUCLEOTIDE SEQUENCE [LARGE SCALE GENOMIC DNA]</scope>
    <source>
        <strain>K12 / W3110 / ATCC 27325 / DSM 5911</strain>
    </source>
</reference>
<reference key="4">
    <citation type="journal article" date="2012" name="J. Bacteriol.">
        <title>The beta-lactam resistance protein Blr, a small membrane polypeptide, is a component of the Escherichia coli cell division machinery.</title>
        <authorList>
            <person name="Karimova G."/>
            <person name="Davi M."/>
            <person name="Ladant D."/>
        </authorList>
    </citation>
    <scope>FUNCTION</scope>
    <scope>INTERACTION WITH FTSL; FTSI; FTSK; FTSN; FTSQ; FTSW AND YMGF</scope>
    <scope>SUBCELLULAR LOCATION</scope>
    <source>
        <strain>K12</strain>
    </source>
</reference>
<organism>
    <name type="scientific">Escherichia coli (strain K12)</name>
    <dbReference type="NCBI Taxonomy" id="83333"/>
    <lineage>
        <taxon>Bacteria</taxon>
        <taxon>Pseudomonadati</taxon>
        <taxon>Pseudomonadota</taxon>
        <taxon>Gammaproteobacteria</taxon>
        <taxon>Enterobacterales</taxon>
        <taxon>Enterobacteriaceae</taxon>
        <taxon>Escherichia</taxon>
    </lineage>
</organism>
<sequence length="41" mass="4556">MNRLIELTGWIVLVVSVILLGVASHIDNYQPPEQSASVQHK</sequence>